<feature type="chain" id="PRO_0000218688" description="Colicin-D">
    <location>
        <begin position="1"/>
        <end position="697"/>
    </location>
</feature>
<feature type="short sequence motif" description="TonB box">
    <location>
        <begin position="17"/>
        <end position="24"/>
    </location>
</feature>
<feature type="helix" evidence="2">
    <location>
        <begin position="313"/>
        <end position="332"/>
    </location>
</feature>
<feature type="helix" evidence="2">
    <location>
        <begin position="342"/>
        <end position="352"/>
    </location>
</feature>
<feature type="strand" evidence="2">
    <location>
        <begin position="359"/>
        <end position="361"/>
    </location>
</feature>
<feature type="strand" evidence="2">
    <location>
        <begin position="366"/>
        <end position="371"/>
    </location>
</feature>
<feature type="turn" evidence="2">
    <location>
        <begin position="372"/>
        <end position="374"/>
    </location>
</feature>
<feature type="strand" evidence="2">
    <location>
        <begin position="375"/>
        <end position="381"/>
    </location>
</feature>
<feature type="helix" evidence="2">
    <location>
        <begin position="385"/>
        <end position="388"/>
    </location>
</feature>
<feature type="helix" evidence="2">
    <location>
        <begin position="389"/>
        <end position="396"/>
    </location>
</feature>
<feature type="strand" evidence="2">
    <location>
        <begin position="406"/>
        <end position="413"/>
    </location>
</feature>
<feature type="strand" evidence="2">
    <location>
        <begin position="436"/>
        <end position="442"/>
    </location>
</feature>
<feature type="helix" evidence="2">
    <location>
        <begin position="443"/>
        <end position="445"/>
    </location>
</feature>
<feature type="strand" evidence="2">
    <location>
        <begin position="457"/>
        <end position="460"/>
    </location>
</feature>
<feature type="strand" evidence="2">
    <location>
        <begin position="462"/>
        <end position="470"/>
    </location>
</feature>
<feature type="strand" evidence="2">
    <location>
        <begin position="473"/>
        <end position="480"/>
    </location>
</feature>
<feature type="strand" evidence="2">
    <location>
        <begin position="482"/>
        <end position="486"/>
    </location>
</feature>
<feature type="strand" evidence="2">
    <location>
        <begin position="488"/>
        <end position="492"/>
    </location>
</feature>
<feature type="turn" evidence="2">
    <location>
        <begin position="499"/>
        <end position="501"/>
    </location>
</feature>
<feature type="strand" evidence="2">
    <location>
        <begin position="504"/>
        <end position="508"/>
    </location>
</feature>
<feature type="strand" evidence="2">
    <location>
        <begin position="517"/>
        <end position="522"/>
    </location>
</feature>
<feature type="helix" evidence="2">
    <location>
        <begin position="566"/>
        <end position="568"/>
    </location>
</feature>
<feature type="strand" evidence="2">
    <location>
        <begin position="572"/>
        <end position="577"/>
    </location>
</feature>
<feature type="strand" evidence="2">
    <location>
        <begin position="581"/>
        <end position="592"/>
    </location>
</feature>
<feature type="strand" evidence="2">
    <location>
        <begin position="597"/>
        <end position="599"/>
    </location>
</feature>
<feature type="helix" evidence="2">
    <location>
        <begin position="602"/>
        <end position="607"/>
    </location>
</feature>
<feature type="helix" evidence="2">
    <location>
        <begin position="609"/>
        <end position="615"/>
    </location>
</feature>
<feature type="helix" evidence="2">
    <location>
        <begin position="624"/>
        <end position="639"/>
    </location>
</feature>
<feature type="strand" evidence="2">
    <location>
        <begin position="656"/>
        <end position="659"/>
    </location>
</feature>
<feature type="turn" evidence="2">
    <location>
        <begin position="661"/>
        <end position="663"/>
    </location>
</feature>
<feature type="strand" evidence="2">
    <location>
        <begin position="665"/>
        <end position="669"/>
    </location>
</feature>
<feature type="strand" evidence="2">
    <location>
        <begin position="675"/>
        <end position="680"/>
    </location>
</feature>
<feature type="helix" evidence="2">
    <location>
        <begin position="686"/>
        <end position="694"/>
    </location>
</feature>
<comment type="function">
    <text>Colicins are polypeptide toxins produced by and active against E.coli and closely related bacteria.</text>
</comment>
<comment type="function">
    <text>Colicin D inhibits protein synthesis.</text>
</comment>
<comment type="interaction">
    <interactant intactId="EBI-1038167">
        <id>P17998</id>
    </interactant>
    <interactant intactId="EBI-1038162">
        <id>P11899</id>
        <label>cdi</label>
    </interactant>
    <organismsDiffer>false</organismsDiffer>
    <experiments>3</experiments>
</comment>
<comment type="miscellaneous">
    <text>This colicin requires TonB for its uptake.</text>
</comment>
<comment type="similarity">
    <text evidence="1">Belongs to the cloacin colicin family.</text>
</comment>
<dbReference type="EMBL" id="X14941">
    <property type="protein sequence ID" value="CAA33072.1"/>
    <property type="molecule type" value="Genomic_DNA"/>
</dbReference>
<dbReference type="PIR" id="S09254">
    <property type="entry name" value="S09254"/>
</dbReference>
<dbReference type="RefSeq" id="WP_016245160.1">
    <property type="nucleotide sequence ID" value="NZ_LM996936.1"/>
</dbReference>
<dbReference type="PDB" id="1TFK">
    <property type="method" value="X-ray"/>
    <property type="resolution" value="2.10 A"/>
    <property type="chains" value="A=604-697"/>
</dbReference>
<dbReference type="PDB" id="1TFO">
    <property type="method" value="X-ray"/>
    <property type="resolution" value="2.30 A"/>
    <property type="chains" value="A=595-697"/>
</dbReference>
<dbReference type="PDB" id="1V74">
    <property type="method" value="X-ray"/>
    <property type="resolution" value="2.00 A"/>
    <property type="chains" value="A=591-697"/>
</dbReference>
<dbReference type="PDB" id="5ZNM">
    <property type="method" value="X-ray"/>
    <property type="resolution" value="1.85 A"/>
    <property type="chains" value="A/B=313-697"/>
</dbReference>
<dbReference type="PDBsum" id="1TFK"/>
<dbReference type="PDBsum" id="1TFO"/>
<dbReference type="PDBsum" id="1V74"/>
<dbReference type="PDBsum" id="5ZNM"/>
<dbReference type="SMR" id="P17998"/>
<dbReference type="IntAct" id="P17998">
    <property type="interactions" value="1"/>
</dbReference>
<dbReference type="EvolutionaryTrace" id="P17998"/>
<dbReference type="GO" id="GO:0005727">
    <property type="term" value="C:extrachromosomal circular DNA"/>
    <property type="evidence" value="ECO:0007669"/>
    <property type="project" value="InterPro"/>
</dbReference>
<dbReference type="GO" id="GO:0004540">
    <property type="term" value="F:RNA nuclease activity"/>
    <property type="evidence" value="ECO:0007669"/>
    <property type="project" value="InterPro"/>
</dbReference>
<dbReference type="GO" id="GO:0042742">
    <property type="term" value="P:defense response to bacterium"/>
    <property type="evidence" value="ECO:0007669"/>
    <property type="project" value="UniProtKB-KW"/>
</dbReference>
<dbReference type="GO" id="GO:0031640">
    <property type="term" value="P:killing of cells of another organism"/>
    <property type="evidence" value="ECO:0007669"/>
    <property type="project" value="UniProtKB-KW"/>
</dbReference>
<dbReference type="Gene3D" id="3.10.450.200">
    <property type="match status" value="1"/>
</dbReference>
<dbReference type="InterPro" id="IPR024575">
    <property type="entry name" value="Cloacin_colicin"/>
</dbReference>
<dbReference type="InterPro" id="IPR038233">
    <property type="entry name" value="Colicin_D/E5_nuclease"/>
</dbReference>
<dbReference type="InterPro" id="IPR024440">
    <property type="entry name" value="ColicinD_C"/>
</dbReference>
<dbReference type="InterPro" id="IPR037178">
    <property type="entry name" value="ColicinD_C_sf"/>
</dbReference>
<dbReference type="InterPro" id="IPR016128">
    <property type="entry name" value="Pyosin/cloacin_T_dom"/>
</dbReference>
<dbReference type="InterPro" id="IPR036302">
    <property type="entry name" value="Pyosin/cloacin_T_dom_sf"/>
</dbReference>
<dbReference type="Pfam" id="PF03515">
    <property type="entry name" value="Cloacin"/>
    <property type="match status" value="1"/>
</dbReference>
<dbReference type="Pfam" id="PF11429">
    <property type="entry name" value="Colicin_D"/>
    <property type="match status" value="1"/>
</dbReference>
<dbReference type="Pfam" id="PF06958">
    <property type="entry name" value="Pyocin_S"/>
    <property type="match status" value="1"/>
</dbReference>
<dbReference type="PRINTS" id="PR01295">
    <property type="entry name" value="CLOACIN"/>
</dbReference>
<dbReference type="SUPFAM" id="SSF69369">
    <property type="entry name" value="Cloacin translocation domain"/>
    <property type="match status" value="2"/>
</dbReference>
<dbReference type="SUPFAM" id="SSF102824">
    <property type="entry name" value="Colicin D/E5 nuclease domain"/>
    <property type="match status" value="1"/>
</dbReference>
<organism>
    <name type="scientific">Escherichia coli</name>
    <dbReference type="NCBI Taxonomy" id="562"/>
    <lineage>
        <taxon>Bacteria</taxon>
        <taxon>Pseudomonadati</taxon>
        <taxon>Pseudomonadota</taxon>
        <taxon>Gammaproteobacteria</taxon>
        <taxon>Enterobacterales</taxon>
        <taxon>Enterobacteriaceae</taxon>
        <taxon>Escherichia</taxon>
    </lineage>
</organism>
<sequence>MSDYEGSGPTEGIDYGHSMVVWPSTGLISGGDVKPGGSSGIAPSMPPGWGDYSPQGIALVQSVLFPGIIRRIILDKELEEGDWSGWSVSVHSPWGNEKVSAARTVLENGLRGGLPEPSRPAAVSFARLEPASGNEQKIIRLMVTQQLEQVTDIPASQLPAAGNNVPVKYRLMDLMQNGTQYMAIIGGIPMTVPVVDAVPVPDRSRPGTNIKDVYSAPVSPNLPDLVLSVGQMNTPVLSNPEIQEEGVIAETGNYVEAGYTMSSNNHDVIVRFPEGSDVSPLYISTVEILDSNGLSQRQEAENKAKDDFRVKKEEAVARAEAEKAKAELFSKAGVNQPPVYTQEMMERANSVMNEQGALVLNNTASSVQLAMTGTGVWTAAGDIAGNISKFFSNALEKVTIPEVSPLLMRISLGALWFHSEEAGAGSDIVPGRNLEAMFSLSAQMLAGQGVVIEPGATSVNLPVRGQLINSNGQLALDLLKTGNESIPAAVPVLNAVRDTATGLDKITLPAVVGAPSRTILVNPVPQPSVPTDTGNHQPVPVTPVHTGTEVKSVEMPVTTITPVSDVGGLRDFIYWRPDAAGTGVEAVYVMLNDPLDSGRFSRKQLDKKYKHAGDFGISDTKKNRETLTKFRDAIEEHLSDKDTVEKGTYRREKGSKVYFNPNTMNVVIIKSNGEFLSGWKINPDADNGRIYLETGEL</sequence>
<gene>
    <name type="primary">cda</name>
</gene>
<reference key="1">
    <citation type="journal article" date="1989" name="Mol. Microbiol.">
        <title>Assembly of colicin genes from a few DNA fragments. Nucleotide sequence of colicin D.</title>
        <authorList>
            <person name="Roos U."/>
            <person name="Harkness R.E."/>
            <person name="Braun V."/>
        </authorList>
    </citation>
    <scope>NUCLEOTIDE SEQUENCE [GENOMIC DNA]</scope>
</reference>
<protein>
    <recommendedName>
        <fullName>Colicin-D</fullName>
    </recommendedName>
</protein>
<proteinExistence type="evidence at protein level"/>
<accession>P17998</accession>
<geneLocation type="plasmid">
    <name>ColD-CA23</name>
</geneLocation>
<evidence type="ECO:0000305" key="1"/>
<evidence type="ECO:0007829" key="2">
    <source>
        <dbReference type="PDB" id="5ZNM"/>
    </source>
</evidence>
<name>CEAD_ECOLX</name>
<keyword id="KW-0002">3D-structure</keyword>
<keyword id="KW-0044">Antibiotic</keyword>
<keyword id="KW-0929">Antimicrobial</keyword>
<keyword id="KW-0078">Bacteriocin</keyword>
<keyword id="KW-0614">Plasmid</keyword>
<keyword id="KW-0798">TonB box</keyword>